<accession>B8DRR9</accession>
<name>AROC_NITV9</name>
<reference key="1">
    <citation type="submission" date="2008-10" db="EMBL/GenBank/DDBJ databases">
        <title>Complete sequence of Desulfovibrio vulgaris str. 'Miyazaki F'.</title>
        <authorList>
            <person name="Lucas S."/>
            <person name="Copeland A."/>
            <person name="Lapidus A."/>
            <person name="Glavina del Rio T."/>
            <person name="Dalin E."/>
            <person name="Tice H."/>
            <person name="Bruce D."/>
            <person name="Goodwin L."/>
            <person name="Pitluck S."/>
            <person name="Sims D."/>
            <person name="Brettin T."/>
            <person name="Detter J.C."/>
            <person name="Han C."/>
            <person name="Larimer F."/>
            <person name="Land M."/>
            <person name="Hauser L."/>
            <person name="Kyrpides N."/>
            <person name="Mikhailova N."/>
            <person name="Hazen T.C."/>
            <person name="Richardson P."/>
        </authorList>
    </citation>
    <scope>NUCLEOTIDE SEQUENCE [LARGE SCALE GENOMIC DNA]</scope>
    <source>
        <strain>DSM 19637 / Miyazaki F</strain>
    </source>
</reference>
<keyword id="KW-0028">Amino-acid biosynthesis</keyword>
<keyword id="KW-0057">Aromatic amino acid biosynthesis</keyword>
<keyword id="KW-0274">FAD</keyword>
<keyword id="KW-0285">Flavoprotein</keyword>
<keyword id="KW-0288">FMN</keyword>
<keyword id="KW-0456">Lyase</keyword>
<keyword id="KW-0521">NADP</keyword>
<evidence type="ECO:0000255" key="1">
    <source>
        <dbReference type="HAMAP-Rule" id="MF_00300"/>
    </source>
</evidence>
<gene>
    <name evidence="1" type="primary">aroC</name>
    <name type="ordered locus">DvMF_1408</name>
</gene>
<feature type="chain" id="PRO_1000119488" description="Chorismate synthase">
    <location>
        <begin position="1"/>
        <end position="353"/>
    </location>
</feature>
<feature type="binding site" evidence="1">
    <location>
        <position position="48"/>
    </location>
    <ligand>
        <name>NADP(+)</name>
        <dbReference type="ChEBI" id="CHEBI:58349"/>
    </ligand>
</feature>
<feature type="binding site" evidence="1">
    <location>
        <begin position="128"/>
        <end position="130"/>
    </location>
    <ligand>
        <name>FMN</name>
        <dbReference type="ChEBI" id="CHEBI:58210"/>
    </ligand>
</feature>
<feature type="binding site" evidence="1">
    <location>
        <position position="280"/>
    </location>
    <ligand>
        <name>FMN</name>
        <dbReference type="ChEBI" id="CHEBI:58210"/>
    </ligand>
</feature>
<feature type="binding site" evidence="1">
    <location>
        <begin position="295"/>
        <end position="299"/>
    </location>
    <ligand>
        <name>FMN</name>
        <dbReference type="ChEBI" id="CHEBI:58210"/>
    </ligand>
</feature>
<feature type="binding site" evidence="1">
    <location>
        <position position="321"/>
    </location>
    <ligand>
        <name>FMN</name>
        <dbReference type="ChEBI" id="CHEBI:58210"/>
    </ligand>
</feature>
<proteinExistence type="inferred from homology"/>
<organism>
    <name type="scientific">Nitratidesulfovibrio vulgaris (strain DSM 19637 / Miyazaki F)</name>
    <name type="common">Desulfovibrio vulgaris</name>
    <dbReference type="NCBI Taxonomy" id="883"/>
    <lineage>
        <taxon>Bacteria</taxon>
        <taxon>Pseudomonadati</taxon>
        <taxon>Thermodesulfobacteriota</taxon>
        <taxon>Desulfovibrionia</taxon>
        <taxon>Desulfovibrionales</taxon>
        <taxon>Desulfovibrionaceae</taxon>
        <taxon>Nitratidesulfovibrio</taxon>
    </lineage>
</organism>
<protein>
    <recommendedName>
        <fullName evidence="1">Chorismate synthase</fullName>
        <shortName evidence="1">CS</shortName>
        <ecNumber evidence="1">4.2.3.5</ecNumber>
    </recommendedName>
    <alternativeName>
        <fullName evidence="1">5-enolpyruvylshikimate-3-phosphate phospholyase</fullName>
    </alternativeName>
</protein>
<sequence>MSGNTFGRIFRLTTYGESHGPGLGGVVDGCPAGVPLDESVIQRELDLRRPGSASAGLAGTARKEPDTVRLLSGVFEGVTTGTPIGFHIANEDQRSRDYGDLAKLYRPGHADITYDAKYGLRDFRGGGRASGRETVSRVAGGAVALALLAMHDIEVRAYTVEIGGVPADVVDPAGAQGRLFFSPDPDVVPAWESLVHDVRAEGDTLGGIVQVEATGVPAGLGEPVFDKLDALLAHAMMSVGAVKAVEVGAGLEAARLRGSENNDPIIPGGFHTNHAGGILGGISNGQPIVVRATVKPIPSIAQEQITIDTNGRPAPLRVGGRHDICAIPRVVPVLKAMAALVLADSLLLQRRMG</sequence>
<dbReference type="EC" id="4.2.3.5" evidence="1"/>
<dbReference type="EMBL" id="CP001197">
    <property type="protein sequence ID" value="ACL08356.1"/>
    <property type="molecule type" value="Genomic_DNA"/>
</dbReference>
<dbReference type="SMR" id="B8DRR9"/>
<dbReference type="STRING" id="883.DvMF_1408"/>
<dbReference type="KEGG" id="dvm:DvMF_1408"/>
<dbReference type="eggNOG" id="COG0082">
    <property type="taxonomic scope" value="Bacteria"/>
</dbReference>
<dbReference type="HOGENOM" id="CLU_034547_0_0_7"/>
<dbReference type="OrthoDB" id="9771806at2"/>
<dbReference type="UniPathway" id="UPA00053">
    <property type="reaction ID" value="UER00090"/>
</dbReference>
<dbReference type="GO" id="GO:0005829">
    <property type="term" value="C:cytosol"/>
    <property type="evidence" value="ECO:0007669"/>
    <property type="project" value="TreeGrafter"/>
</dbReference>
<dbReference type="GO" id="GO:0004107">
    <property type="term" value="F:chorismate synthase activity"/>
    <property type="evidence" value="ECO:0007669"/>
    <property type="project" value="UniProtKB-UniRule"/>
</dbReference>
<dbReference type="GO" id="GO:0010181">
    <property type="term" value="F:FMN binding"/>
    <property type="evidence" value="ECO:0007669"/>
    <property type="project" value="TreeGrafter"/>
</dbReference>
<dbReference type="GO" id="GO:0008652">
    <property type="term" value="P:amino acid biosynthetic process"/>
    <property type="evidence" value="ECO:0007669"/>
    <property type="project" value="UniProtKB-KW"/>
</dbReference>
<dbReference type="GO" id="GO:0009073">
    <property type="term" value="P:aromatic amino acid family biosynthetic process"/>
    <property type="evidence" value="ECO:0007669"/>
    <property type="project" value="UniProtKB-KW"/>
</dbReference>
<dbReference type="GO" id="GO:0009423">
    <property type="term" value="P:chorismate biosynthetic process"/>
    <property type="evidence" value="ECO:0007669"/>
    <property type="project" value="UniProtKB-UniRule"/>
</dbReference>
<dbReference type="CDD" id="cd07304">
    <property type="entry name" value="Chorismate_synthase"/>
    <property type="match status" value="1"/>
</dbReference>
<dbReference type="Gene3D" id="3.60.150.10">
    <property type="entry name" value="Chorismate synthase AroC"/>
    <property type="match status" value="1"/>
</dbReference>
<dbReference type="HAMAP" id="MF_00300">
    <property type="entry name" value="Chorismate_synth"/>
    <property type="match status" value="1"/>
</dbReference>
<dbReference type="InterPro" id="IPR000453">
    <property type="entry name" value="Chorismate_synth"/>
</dbReference>
<dbReference type="InterPro" id="IPR035904">
    <property type="entry name" value="Chorismate_synth_AroC_sf"/>
</dbReference>
<dbReference type="InterPro" id="IPR020541">
    <property type="entry name" value="Chorismate_synthase_CS"/>
</dbReference>
<dbReference type="NCBIfam" id="TIGR00033">
    <property type="entry name" value="aroC"/>
    <property type="match status" value="1"/>
</dbReference>
<dbReference type="NCBIfam" id="NF003793">
    <property type="entry name" value="PRK05382.1"/>
    <property type="match status" value="1"/>
</dbReference>
<dbReference type="PANTHER" id="PTHR21085">
    <property type="entry name" value="CHORISMATE SYNTHASE"/>
    <property type="match status" value="1"/>
</dbReference>
<dbReference type="PANTHER" id="PTHR21085:SF0">
    <property type="entry name" value="CHORISMATE SYNTHASE"/>
    <property type="match status" value="1"/>
</dbReference>
<dbReference type="Pfam" id="PF01264">
    <property type="entry name" value="Chorismate_synt"/>
    <property type="match status" value="1"/>
</dbReference>
<dbReference type="PIRSF" id="PIRSF001456">
    <property type="entry name" value="Chorismate_synth"/>
    <property type="match status" value="1"/>
</dbReference>
<dbReference type="SUPFAM" id="SSF103263">
    <property type="entry name" value="Chorismate synthase, AroC"/>
    <property type="match status" value="1"/>
</dbReference>
<dbReference type="PROSITE" id="PS00787">
    <property type="entry name" value="CHORISMATE_SYNTHASE_1"/>
    <property type="match status" value="1"/>
</dbReference>
<dbReference type="PROSITE" id="PS00788">
    <property type="entry name" value="CHORISMATE_SYNTHASE_2"/>
    <property type="match status" value="1"/>
</dbReference>
<comment type="function">
    <text evidence="1">Catalyzes the anti-1,4-elimination of the C-3 phosphate and the C-6 proR hydrogen from 5-enolpyruvylshikimate-3-phosphate (EPSP) to yield chorismate, which is the branch point compound that serves as the starting substrate for the three terminal pathways of aromatic amino acid biosynthesis. This reaction introduces a second double bond into the aromatic ring system.</text>
</comment>
<comment type="catalytic activity">
    <reaction evidence="1">
        <text>5-O-(1-carboxyvinyl)-3-phosphoshikimate = chorismate + phosphate</text>
        <dbReference type="Rhea" id="RHEA:21020"/>
        <dbReference type="ChEBI" id="CHEBI:29748"/>
        <dbReference type="ChEBI" id="CHEBI:43474"/>
        <dbReference type="ChEBI" id="CHEBI:57701"/>
        <dbReference type="EC" id="4.2.3.5"/>
    </reaction>
</comment>
<comment type="cofactor">
    <cofactor evidence="1">
        <name>FMNH2</name>
        <dbReference type="ChEBI" id="CHEBI:57618"/>
    </cofactor>
    <text evidence="1">Reduced FMN (FMNH(2)).</text>
</comment>
<comment type="pathway">
    <text evidence="1">Metabolic intermediate biosynthesis; chorismate biosynthesis; chorismate from D-erythrose 4-phosphate and phosphoenolpyruvate: step 7/7.</text>
</comment>
<comment type="subunit">
    <text evidence="1">Homotetramer.</text>
</comment>
<comment type="similarity">
    <text evidence="1">Belongs to the chorismate synthase family.</text>
</comment>